<organism>
    <name type="scientific">Arabidopsis thaliana</name>
    <name type="common">Mouse-ear cress</name>
    <dbReference type="NCBI Taxonomy" id="3702"/>
    <lineage>
        <taxon>Eukaryota</taxon>
        <taxon>Viridiplantae</taxon>
        <taxon>Streptophyta</taxon>
        <taxon>Embryophyta</taxon>
        <taxon>Tracheophyta</taxon>
        <taxon>Spermatophyta</taxon>
        <taxon>Magnoliopsida</taxon>
        <taxon>eudicotyledons</taxon>
        <taxon>Gunneridae</taxon>
        <taxon>Pentapetalae</taxon>
        <taxon>rosids</taxon>
        <taxon>malvids</taxon>
        <taxon>Brassicales</taxon>
        <taxon>Brassicaceae</taxon>
        <taxon>Camelineae</taxon>
        <taxon>Arabidopsis</taxon>
    </lineage>
</organism>
<comment type="subcellular location">
    <subcellularLocation>
        <location evidence="2">Plastid</location>
        <location evidence="2">Chloroplast</location>
    </subcellularLocation>
</comment>
<comment type="similarity">
    <text evidence="2">Belongs to the PPR family. P subfamily.</text>
</comment>
<comment type="sequence caution" evidence="2">
    <conflict type="erroneous gene model prediction">
        <sequence resource="EMBL-CDS" id="AAC16962"/>
    </conflict>
    <text>The predicted gene has been split into 2 genes: At2g30100 and At2g30105.</text>
</comment>
<comment type="sequence caution" evidence="2">
    <conflict type="miscellaneous discrepancy">
        <sequence resource="EMBL-CDS" id="BAF01262"/>
    </conflict>
    <text>Contaminating sequence. Insertion of a transposable element sequence at position 213.</text>
</comment>
<comment type="online information" name="Pentatricopeptide repeat proteins">
    <link uri="https://ppr.plantenergy.uwa.edu.au"/>
</comment>
<name>PP176_ARATH</name>
<sequence length="503" mass="57555">MAYAHVFASLTISTISLRRFLPRLHRNHSVKPNSRIICNLKLNYSAGKFREMGLSRSVELDQFITSEEEEGEAEEIGEGFFEAIEELERMTREPSDILEEMNHRLSSRELQLMLVYFAQEGRDSWCTLEVFEWLKKENRVDEEIMELMVSIMCGWVKKLIEDECNAHQVFDLLIEMDCVGLKPGFSMMDKVIALYCEMGKKESAVLFVKEVLRRRDGFGYSVVGGGGSEGRKGGPVGYLAWKFMVDGDYRKAVDMVMELRLSGLKPEAYSYLIAMTAIVKELNSLGKTLRELKRFARAGFVAEIDDHDRVLIEKYQSETLSRGLQLATWAVEEGQENDSIIGVVHERLLAMYICAGRGPEAEKQLWKMKLAGREPEADLHDIVMAICASQKEVNAVSRLLTRVEFMGSQRKKKTLSWLLRGYVKGGHFEEAAETLVSMIDSGLHPEYIDRVAVMQGMTRKIQRPRDVEAYMSLCKRLFDAGLVGPCLVYMYIDKYKLWIVKMM</sequence>
<accession>Q0WNN7</accession>
<accession>O64736</accession>
<gene>
    <name type="ordered locus">At2g30100</name>
    <name type="ORF">T27E13.16</name>
</gene>
<reference key="1">
    <citation type="journal article" date="1999" name="Nature">
        <title>Sequence and analysis of chromosome 2 of the plant Arabidopsis thaliana.</title>
        <authorList>
            <person name="Lin X."/>
            <person name="Kaul S."/>
            <person name="Rounsley S.D."/>
            <person name="Shea T.P."/>
            <person name="Benito M.-I."/>
            <person name="Town C.D."/>
            <person name="Fujii C.Y."/>
            <person name="Mason T.M."/>
            <person name="Bowman C.L."/>
            <person name="Barnstead M.E."/>
            <person name="Feldblyum T.V."/>
            <person name="Buell C.R."/>
            <person name="Ketchum K.A."/>
            <person name="Lee J.J."/>
            <person name="Ronning C.M."/>
            <person name="Koo H.L."/>
            <person name="Moffat K.S."/>
            <person name="Cronin L.A."/>
            <person name="Shen M."/>
            <person name="Pai G."/>
            <person name="Van Aken S."/>
            <person name="Umayam L."/>
            <person name="Tallon L.J."/>
            <person name="Gill J.E."/>
            <person name="Adams M.D."/>
            <person name="Carrera A.J."/>
            <person name="Creasy T.H."/>
            <person name="Goodman H.M."/>
            <person name="Somerville C.R."/>
            <person name="Copenhaver G.P."/>
            <person name="Preuss D."/>
            <person name="Nierman W.C."/>
            <person name="White O."/>
            <person name="Eisen J.A."/>
            <person name="Salzberg S.L."/>
            <person name="Fraser C.M."/>
            <person name="Venter J.C."/>
        </authorList>
    </citation>
    <scope>NUCLEOTIDE SEQUENCE [LARGE SCALE GENOMIC DNA]</scope>
    <source>
        <strain>cv. Columbia</strain>
    </source>
</reference>
<reference key="2">
    <citation type="journal article" date="2017" name="Plant J.">
        <title>Araport11: a complete reannotation of the Arabidopsis thaliana reference genome.</title>
        <authorList>
            <person name="Cheng C.Y."/>
            <person name="Krishnakumar V."/>
            <person name="Chan A.P."/>
            <person name="Thibaud-Nissen F."/>
            <person name="Schobel S."/>
            <person name="Town C.D."/>
        </authorList>
    </citation>
    <scope>GENOME REANNOTATION</scope>
    <source>
        <strain>cv. Columbia</strain>
    </source>
</reference>
<reference key="3">
    <citation type="submission" date="2006-07" db="EMBL/GenBank/DDBJ databases">
        <title>Large-scale analysis of RIKEN Arabidopsis full-length (RAFL) cDNAs.</title>
        <authorList>
            <person name="Totoki Y."/>
            <person name="Seki M."/>
            <person name="Ishida J."/>
            <person name="Nakajima M."/>
            <person name="Enju A."/>
            <person name="Kamiya A."/>
            <person name="Narusaka M."/>
            <person name="Shin-i T."/>
            <person name="Nakagawa M."/>
            <person name="Sakamoto N."/>
            <person name="Oishi K."/>
            <person name="Kohara Y."/>
            <person name="Kobayashi M."/>
            <person name="Toyoda A."/>
            <person name="Sakaki Y."/>
            <person name="Sakurai T."/>
            <person name="Iida K."/>
            <person name="Akiyama K."/>
            <person name="Satou M."/>
            <person name="Toyoda T."/>
            <person name="Konagaya A."/>
            <person name="Carninci P."/>
            <person name="Kawai J."/>
            <person name="Hayashizaki Y."/>
            <person name="Shinozaki K."/>
        </authorList>
    </citation>
    <scope>NUCLEOTIDE SEQUENCE [LARGE SCALE MRNA]</scope>
    <source>
        <strain>cv. Columbia</strain>
    </source>
</reference>
<reference key="4">
    <citation type="journal article" date="2004" name="Plant Cell">
        <title>Genome-wide analysis of Arabidopsis pentatricopeptide repeat proteins reveals their essential role in organelle biogenesis.</title>
        <authorList>
            <person name="Lurin C."/>
            <person name="Andres C."/>
            <person name="Aubourg S."/>
            <person name="Bellaoui M."/>
            <person name="Bitton F."/>
            <person name="Bruyere C."/>
            <person name="Caboche M."/>
            <person name="Debast C."/>
            <person name="Gualberto J."/>
            <person name="Hoffmann B."/>
            <person name="Lecharny A."/>
            <person name="Le Ret M."/>
            <person name="Martin-Magniette M.-L."/>
            <person name="Mireau H."/>
            <person name="Peeters N."/>
            <person name="Renou J.-P."/>
            <person name="Szurek B."/>
            <person name="Taconnat L."/>
            <person name="Small I."/>
        </authorList>
    </citation>
    <scope>GENE FAMILY</scope>
</reference>
<proteinExistence type="evidence at transcript level"/>
<keyword id="KW-0150">Chloroplast</keyword>
<keyword id="KW-0934">Plastid</keyword>
<keyword id="KW-1185">Reference proteome</keyword>
<keyword id="KW-0677">Repeat</keyword>
<keyword id="KW-0809">Transit peptide</keyword>
<feature type="transit peptide" description="Chloroplast" evidence="1">
    <location>
        <begin position="1"/>
        <end position="50"/>
    </location>
</feature>
<feature type="chain" id="PRO_0000356035" description="Pentatricopeptide repeat-containing protein At2g30100, chloroplastic">
    <location>
        <begin position="51"/>
        <end position="503"/>
    </location>
</feature>
<feature type="repeat" description="PPR 1">
    <location>
        <begin position="341"/>
        <end position="375"/>
    </location>
</feature>
<feature type="repeat" description="PPR 2">
    <location>
        <begin position="376"/>
        <end position="410"/>
    </location>
</feature>
<feature type="repeat" description="PPR 3">
    <location>
        <begin position="411"/>
        <end position="445"/>
    </location>
</feature>
<evidence type="ECO:0000255" key="1"/>
<evidence type="ECO:0000305" key="2"/>
<protein>
    <recommendedName>
        <fullName>Pentatricopeptide repeat-containing protein At2g30100, chloroplastic</fullName>
    </recommendedName>
</protein>
<dbReference type="EMBL" id="AC004165">
    <property type="protein sequence ID" value="AAC16962.1"/>
    <property type="status" value="ALT_SEQ"/>
    <property type="molecule type" value="Genomic_DNA"/>
</dbReference>
<dbReference type="EMBL" id="CP002685">
    <property type="protein sequence ID" value="AEC08344.1"/>
    <property type="molecule type" value="Genomic_DNA"/>
</dbReference>
<dbReference type="EMBL" id="AK229400">
    <property type="protein sequence ID" value="BAF01262.1"/>
    <property type="status" value="ALT_SEQ"/>
    <property type="molecule type" value="mRNA"/>
</dbReference>
<dbReference type="PIR" id="T00588">
    <property type="entry name" value="T00588"/>
</dbReference>
<dbReference type="RefSeq" id="NP_180571.3">
    <property type="nucleotide sequence ID" value="NM_128565.5"/>
</dbReference>
<dbReference type="SMR" id="Q0WNN7"/>
<dbReference type="FunCoup" id="Q0WNN7">
    <property type="interactions" value="366"/>
</dbReference>
<dbReference type="PaxDb" id="3702-AT2G30100.1"/>
<dbReference type="ProteomicsDB" id="249145"/>
<dbReference type="EnsemblPlants" id="AT2G30100.1">
    <property type="protein sequence ID" value="AT2G30100.1"/>
    <property type="gene ID" value="AT2G30100"/>
</dbReference>
<dbReference type="GeneID" id="817561"/>
<dbReference type="Gramene" id="AT2G30100.1">
    <property type="protein sequence ID" value="AT2G30100.1"/>
    <property type="gene ID" value="AT2G30100"/>
</dbReference>
<dbReference type="KEGG" id="ath:AT2G30100"/>
<dbReference type="Araport" id="AT2G30100"/>
<dbReference type="TAIR" id="AT2G30100"/>
<dbReference type="eggNOG" id="ENOG502QS05">
    <property type="taxonomic scope" value="Eukaryota"/>
</dbReference>
<dbReference type="HOGENOM" id="CLU_046053_1_0_1"/>
<dbReference type="InParanoid" id="Q0WNN7"/>
<dbReference type="OMA" id="RLLAMYV"/>
<dbReference type="PhylomeDB" id="Q0WNN7"/>
<dbReference type="PRO" id="PR:Q0WNN7"/>
<dbReference type="Proteomes" id="UP000006548">
    <property type="component" value="Chromosome 2"/>
</dbReference>
<dbReference type="ExpressionAtlas" id="Q0WNN7">
    <property type="expression patterns" value="baseline and differential"/>
</dbReference>
<dbReference type="GO" id="GO:0009507">
    <property type="term" value="C:chloroplast"/>
    <property type="evidence" value="ECO:0007669"/>
    <property type="project" value="UniProtKB-SubCell"/>
</dbReference>
<dbReference type="Gene3D" id="1.25.40.10">
    <property type="entry name" value="Tetratricopeptide repeat domain"/>
    <property type="match status" value="2"/>
</dbReference>
<dbReference type="InterPro" id="IPR002885">
    <property type="entry name" value="Pentatricopeptide_rpt"/>
</dbReference>
<dbReference type="InterPro" id="IPR011990">
    <property type="entry name" value="TPR-like_helical_dom_sf"/>
</dbReference>
<dbReference type="NCBIfam" id="TIGR00756">
    <property type="entry name" value="PPR"/>
    <property type="match status" value="1"/>
</dbReference>
<dbReference type="PANTHER" id="PTHR47880">
    <property type="entry name" value="OS05G0353300 PROTEIN"/>
    <property type="match status" value="1"/>
</dbReference>
<dbReference type="PANTHER" id="PTHR47880:SF1">
    <property type="entry name" value="OS05G0353300 PROTEIN"/>
    <property type="match status" value="1"/>
</dbReference>
<dbReference type="PROSITE" id="PS51375">
    <property type="entry name" value="PPR"/>
    <property type="match status" value="3"/>
</dbReference>